<protein>
    <recommendedName>
        <fullName evidence="1">Small ribosomal subunit protein uS5</fullName>
    </recommendedName>
    <alternativeName>
        <fullName evidence="2">30S ribosomal protein S5</fullName>
    </alternativeName>
</protein>
<comment type="function">
    <text evidence="1">With S4 and S12 plays an important role in translational accuracy.</text>
</comment>
<comment type="function">
    <text evidence="1">Located at the back of the 30S subunit body where it stabilizes the conformation of the head with respect to the body.</text>
</comment>
<comment type="subunit">
    <text evidence="1">Part of the 30S ribosomal subunit. Contacts proteins S4 and S8.</text>
</comment>
<comment type="domain">
    <text>The N-terminal domain interacts with the head of the 30S subunit; the C-terminal domain interacts with the body and contacts protein S4. The interaction surface between S4 and S5 is involved in control of translational fidelity.</text>
</comment>
<comment type="similarity">
    <text evidence="1">Belongs to the universal ribosomal protein uS5 family.</text>
</comment>
<dbReference type="EMBL" id="CP000413">
    <property type="protein sequence ID" value="ABJ59713.1"/>
    <property type="molecule type" value="Genomic_DNA"/>
</dbReference>
<dbReference type="RefSeq" id="WP_003647820.1">
    <property type="nucleotide sequence ID" value="NZ_WBMG01000001.1"/>
</dbReference>
<dbReference type="SMR" id="Q046A9"/>
<dbReference type="GeneID" id="83569771"/>
<dbReference type="KEGG" id="lga:LGAS_0307"/>
<dbReference type="HOGENOM" id="CLU_065898_2_2_9"/>
<dbReference type="BioCyc" id="LGAS324831:G1G6Y-306-MONOMER"/>
<dbReference type="Proteomes" id="UP000000664">
    <property type="component" value="Chromosome"/>
</dbReference>
<dbReference type="GO" id="GO:0015935">
    <property type="term" value="C:small ribosomal subunit"/>
    <property type="evidence" value="ECO:0007669"/>
    <property type="project" value="InterPro"/>
</dbReference>
<dbReference type="GO" id="GO:0019843">
    <property type="term" value="F:rRNA binding"/>
    <property type="evidence" value="ECO:0007669"/>
    <property type="project" value="UniProtKB-UniRule"/>
</dbReference>
<dbReference type="GO" id="GO:0003735">
    <property type="term" value="F:structural constituent of ribosome"/>
    <property type="evidence" value="ECO:0007669"/>
    <property type="project" value="InterPro"/>
</dbReference>
<dbReference type="GO" id="GO:0006412">
    <property type="term" value="P:translation"/>
    <property type="evidence" value="ECO:0007669"/>
    <property type="project" value="UniProtKB-UniRule"/>
</dbReference>
<dbReference type="FunFam" id="3.30.160.20:FF:000001">
    <property type="entry name" value="30S ribosomal protein S5"/>
    <property type="match status" value="1"/>
</dbReference>
<dbReference type="FunFam" id="3.30.230.10:FF:000002">
    <property type="entry name" value="30S ribosomal protein S5"/>
    <property type="match status" value="1"/>
</dbReference>
<dbReference type="Gene3D" id="3.30.160.20">
    <property type="match status" value="1"/>
</dbReference>
<dbReference type="Gene3D" id="3.30.230.10">
    <property type="match status" value="1"/>
</dbReference>
<dbReference type="HAMAP" id="MF_01307_B">
    <property type="entry name" value="Ribosomal_uS5_B"/>
    <property type="match status" value="1"/>
</dbReference>
<dbReference type="InterPro" id="IPR020568">
    <property type="entry name" value="Ribosomal_Su5_D2-typ_SF"/>
</dbReference>
<dbReference type="InterPro" id="IPR000851">
    <property type="entry name" value="Ribosomal_uS5"/>
</dbReference>
<dbReference type="InterPro" id="IPR005712">
    <property type="entry name" value="Ribosomal_uS5_bac-type"/>
</dbReference>
<dbReference type="InterPro" id="IPR005324">
    <property type="entry name" value="Ribosomal_uS5_C"/>
</dbReference>
<dbReference type="InterPro" id="IPR013810">
    <property type="entry name" value="Ribosomal_uS5_N"/>
</dbReference>
<dbReference type="InterPro" id="IPR018192">
    <property type="entry name" value="Ribosomal_uS5_N_CS"/>
</dbReference>
<dbReference type="InterPro" id="IPR014721">
    <property type="entry name" value="Ribsml_uS5_D2-typ_fold_subgr"/>
</dbReference>
<dbReference type="NCBIfam" id="TIGR01021">
    <property type="entry name" value="rpsE_bact"/>
    <property type="match status" value="1"/>
</dbReference>
<dbReference type="PANTHER" id="PTHR48277">
    <property type="entry name" value="MITOCHONDRIAL RIBOSOMAL PROTEIN S5"/>
    <property type="match status" value="1"/>
</dbReference>
<dbReference type="PANTHER" id="PTHR48277:SF1">
    <property type="entry name" value="MITOCHONDRIAL RIBOSOMAL PROTEIN S5"/>
    <property type="match status" value="1"/>
</dbReference>
<dbReference type="Pfam" id="PF00333">
    <property type="entry name" value="Ribosomal_S5"/>
    <property type="match status" value="1"/>
</dbReference>
<dbReference type="Pfam" id="PF03719">
    <property type="entry name" value="Ribosomal_S5_C"/>
    <property type="match status" value="1"/>
</dbReference>
<dbReference type="SUPFAM" id="SSF54768">
    <property type="entry name" value="dsRNA-binding domain-like"/>
    <property type="match status" value="1"/>
</dbReference>
<dbReference type="SUPFAM" id="SSF54211">
    <property type="entry name" value="Ribosomal protein S5 domain 2-like"/>
    <property type="match status" value="1"/>
</dbReference>
<dbReference type="PROSITE" id="PS00585">
    <property type="entry name" value="RIBOSOMAL_S5"/>
    <property type="match status" value="1"/>
</dbReference>
<dbReference type="PROSITE" id="PS50881">
    <property type="entry name" value="S5_DSRBD"/>
    <property type="match status" value="1"/>
</dbReference>
<evidence type="ECO:0000255" key="1">
    <source>
        <dbReference type="HAMAP-Rule" id="MF_01307"/>
    </source>
</evidence>
<evidence type="ECO:0000305" key="2"/>
<sequence length="174" mass="18717">MANRNDSRRDSRKDRKKDDIEDQLVAINRITKVVKGGRRMRFAAVVIVGDRKGHVGFGTGKAQEVPEAIRKAVEAGKKRMIKVPTVGTTIPHEVMGHYGSGNIMLKPAEAGSGVAAGGAVRIIMDLAGISDVTSKSLGSNTPINVIRATMDGLSKLKTREDVLKLRESAKSLED</sequence>
<organism>
    <name type="scientific">Lactobacillus gasseri (strain ATCC 33323 / DSM 20243 / BCRC 14619 / CIP 102991 / JCM 1131 / KCTC 3163 / NCIMB 11718 / NCTC 13722 / AM63)</name>
    <dbReference type="NCBI Taxonomy" id="324831"/>
    <lineage>
        <taxon>Bacteria</taxon>
        <taxon>Bacillati</taxon>
        <taxon>Bacillota</taxon>
        <taxon>Bacilli</taxon>
        <taxon>Lactobacillales</taxon>
        <taxon>Lactobacillaceae</taxon>
        <taxon>Lactobacillus</taxon>
    </lineage>
</organism>
<proteinExistence type="inferred from homology"/>
<accession>Q046A9</accession>
<reference key="1">
    <citation type="journal article" date="2006" name="Proc. Natl. Acad. Sci. U.S.A.">
        <title>Comparative genomics of the lactic acid bacteria.</title>
        <authorList>
            <person name="Makarova K.S."/>
            <person name="Slesarev A."/>
            <person name="Wolf Y.I."/>
            <person name="Sorokin A."/>
            <person name="Mirkin B."/>
            <person name="Koonin E.V."/>
            <person name="Pavlov A."/>
            <person name="Pavlova N."/>
            <person name="Karamychev V."/>
            <person name="Polouchine N."/>
            <person name="Shakhova V."/>
            <person name="Grigoriev I."/>
            <person name="Lou Y."/>
            <person name="Rohksar D."/>
            <person name="Lucas S."/>
            <person name="Huang K."/>
            <person name="Goodstein D.M."/>
            <person name="Hawkins T."/>
            <person name="Plengvidhya V."/>
            <person name="Welker D."/>
            <person name="Hughes J."/>
            <person name="Goh Y."/>
            <person name="Benson A."/>
            <person name="Baldwin K."/>
            <person name="Lee J.-H."/>
            <person name="Diaz-Muniz I."/>
            <person name="Dosti B."/>
            <person name="Smeianov V."/>
            <person name="Wechter W."/>
            <person name="Barabote R."/>
            <person name="Lorca G."/>
            <person name="Altermann E."/>
            <person name="Barrangou R."/>
            <person name="Ganesan B."/>
            <person name="Xie Y."/>
            <person name="Rawsthorne H."/>
            <person name="Tamir D."/>
            <person name="Parker C."/>
            <person name="Breidt F."/>
            <person name="Broadbent J.R."/>
            <person name="Hutkins R."/>
            <person name="O'Sullivan D."/>
            <person name="Steele J."/>
            <person name="Unlu G."/>
            <person name="Saier M.H. Jr."/>
            <person name="Klaenhammer T."/>
            <person name="Richardson P."/>
            <person name="Kozyavkin S."/>
            <person name="Weimer B.C."/>
            <person name="Mills D.A."/>
        </authorList>
    </citation>
    <scope>NUCLEOTIDE SEQUENCE [LARGE SCALE GENOMIC DNA]</scope>
    <source>
        <strain>ATCC 33323 / DSM 20243 / BCRC 14619 / CIP 102991 / JCM 1131 / KCTC 3163 / NCIMB 11718 / NCTC 13722 / AM63</strain>
    </source>
</reference>
<gene>
    <name evidence="1" type="primary">rpsE</name>
    <name type="ordered locus">LGAS_0307</name>
</gene>
<feature type="chain" id="PRO_1000086022" description="Small ribosomal subunit protein uS5">
    <location>
        <begin position="1"/>
        <end position="174"/>
    </location>
</feature>
<feature type="domain" description="S5 DRBM" evidence="1">
    <location>
        <begin position="20"/>
        <end position="83"/>
    </location>
</feature>
<name>RS5_LACGA</name>
<keyword id="KW-0687">Ribonucleoprotein</keyword>
<keyword id="KW-0689">Ribosomal protein</keyword>
<keyword id="KW-0694">RNA-binding</keyword>
<keyword id="KW-0699">rRNA-binding</keyword>